<dbReference type="EC" id="2.7.8.26" evidence="1"/>
<dbReference type="EMBL" id="CP001127">
    <property type="protein sequence ID" value="ACF89378.1"/>
    <property type="molecule type" value="Genomic_DNA"/>
</dbReference>
<dbReference type="RefSeq" id="WP_000040001.1">
    <property type="nucleotide sequence ID" value="NC_011094.1"/>
</dbReference>
<dbReference type="KEGG" id="sew:SeSA_A2186"/>
<dbReference type="HOGENOM" id="CLU_057426_1_2_6"/>
<dbReference type="UniPathway" id="UPA00148">
    <property type="reaction ID" value="UER00238"/>
</dbReference>
<dbReference type="Proteomes" id="UP000001865">
    <property type="component" value="Chromosome"/>
</dbReference>
<dbReference type="GO" id="GO:0005886">
    <property type="term" value="C:plasma membrane"/>
    <property type="evidence" value="ECO:0007669"/>
    <property type="project" value="UniProtKB-SubCell"/>
</dbReference>
<dbReference type="GO" id="GO:0051073">
    <property type="term" value="F:adenosylcobinamide-GDP ribazoletransferase activity"/>
    <property type="evidence" value="ECO:0007669"/>
    <property type="project" value="UniProtKB-UniRule"/>
</dbReference>
<dbReference type="GO" id="GO:0008818">
    <property type="term" value="F:cobalamin 5'-phosphate synthase activity"/>
    <property type="evidence" value="ECO:0007669"/>
    <property type="project" value="UniProtKB-UniRule"/>
</dbReference>
<dbReference type="GO" id="GO:0009236">
    <property type="term" value="P:cobalamin biosynthetic process"/>
    <property type="evidence" value="ECO:0007669"/>
    <property type="project" value="UniProtKB-UniRule"/>
</dbReference>
<dbReference type="HAMAP" id="MF_00719">
    <property type="entry name" value="CobS"/>
    <property type="match status" value="1"/>
</dbReference>
<dbReference type="InterPro" id="IPR003805">
    <property type="entry name" value="CobS"/>
</dbReference>
<dbReference type="NCBIfam" id="TIGR00317">
    <property type="entry name" value="cobS"/>
    <property type="match status" value="1"/>
</dbReference>
<dbReference type="PANTHER" id="PTHR34148">
    <property type="entry name" value="ADENOSYLCOBINAMIDE-GDP RIBAZOLETRANSFERASE"/>
    <property type="match status" value="1"/>
</dbReference>
<dbReference type="PANTHER" id="PTHR34148:SF1">
    <property type="entry name" value="ADENOSYLCOBINAMIDE-GDP RIBAZOLETRANSFERASE"/>
    <property type="match status" value="1"/>
</dbReference>
<dbReference type="Pfam" id="PF02654">
    <property type="entry name" value="CobS"/>
    <property type="match status" value="1"/>
</dbReference>
<accession>B4TZP6</accession>
<keyword id="KW-0997">Cell inner membrane</keyword>
<keyword id="KW-1003">Cell membrane</keyword>
<keyword id="KW-0169">Cobalamin biosynthesis</keyword>
<keyword id="KW-0460">Magnesium</keyword>
<keyword id="KW-0472">Membrane</keyword>
<keyword id="KW-0808">Transferase</keyword>
<keyword id="KW-0812">Transmembrane</keyword>
<keyword id="KW-1133">Transmembrane helix</keyword>
<comment type="function">
    <text evidence="1">Joins adenosylcobinamide-GDP and alpha-ribazole to generate adenosylcobalamin (Ado-cobalamin). Also synthesizes adenosylcobalamin 5'-phosphate from adenosylcobinamide-GDP and alpha-ribazole 5'-phosphate.</text>
</comment>
<comment type="catalytic activity">
    <reaction evidence="1">
        <text>alpha-ribazole + adenosylcob(III)inamide-GDP = adenosylcob(III)alamin + GMP + H(+)</text>
        <dbReference type="Rhea" id="RHEA:16049"/>
        <dbReference type="ChEBI" id="CHEBI:10329"/>
        <dbReference type="ChEBI" id="CHEBI:15378"/>
        <dbReference type="ChEBI" id="CHEBI:18408"/>
        <dbReference type="ChEBI" id="CHEBI:58115"/>
        <dbReference type="ChEBI" id="CHEBI:60487"/>
        <dbReference type="EC" id="2.7.8.26"/>
    </reaction>
</comment>
<comment type="catalytic activity">
    <reaction evidence="1">
        <text>alpha-ribazole 5'-phosphate + adenosylcob(III)inamide-GDP = adenosylcob(III)alamin 5'-phosphate + GMP + H(+)</text>
        <dbReference type="Rhea" id="RHEA:23560"/>
        <dbReference type="ChEBI" id="CHEBI:15378"/>
        <dbReference type="ChEBI" id="CHEBI:57918"/>
        <dbReference type="ChEBI" id="CHEBI:58115"/>
        <dbReference type="ChEBI" id="CHEBI:60487"/>
        <dbReference type="ChEBI" id="CHEBI:60493"/>
        <dbReference type="EC" id="2.7.8.26"/>
    </reaction>
</comment>
<comment type="cofactor">
    <cofactor evidence="1">
        <name>Mg(2+)</name>
        <dbReference type="ChEBI" id="CHEBI:18420"/>
    </cofactor>
</comment>
<comment type="pathway">
    <text evidence="1">Cofactor biosynthesis; adenosylcobalamin biosynthesis; adenosylcobalamin from cob(II)yrinate a,c-diamide: step 7/7.</text>
</comment>
<comment type="subcellular location">
    <subcellularLocation>
        <location evidence="1">Cell inner membrane</location>
        <topology evidence="1">Multi-pass membrane protein</topology>
    </subcellularLocation>
</comment>
<comment type="similarity">
    <text evidence="1">Belongs to the CobS family.</text>
</comment>
<name>COBS_SALSV</name>
<proteinExistence type="inferred from homology"/>
<reference key="1">
    <citation type="journal article" date="2011" name="J. Bacteriol.">
        <title>Comparative genomics of 28 Salmonella enterica isolates: evidence for CRISPR-mediated adaptive sublineage evolution.</title>
        <authorList>
            <person name="Fricke W.F."/>
            <person name="Mammel M.K."/>
            <person name="McDermott P.F."/>
            <person name="Tartera C."/>
            <person name="White D.G."/>
            <person name="Leclerc J.E."/>
            <person name="Ravel J."/>
            <person name="Cebula T.A."/>
        </authorList>
    </citation>
    <scope>NUCLEOTIDE SEQUENCE [LARGE SCALE GENOMIC DNA]</scope>
    <source>
        <strain>CVM19633</strain>
    </source>
</reference>
<evidence type="ECO:0000255" key="1">
    <source>
        <dbReference type="HAMAP-Rule" id="MF_00719"/>
    </source>
</evidence>
<organism>
    <name type="scientific">Salmonella schwarzengrund (strain CVM19633)</name>
    <dbReference type="NCBI Taxonomy" id="439843"/>
    <lineage>
        <taxon>Bacteria</taxon>
        <taxon>Pseudomonadati</taxon>
        <taxon>Pseudomonadota</taxon>
        <taxon>Gammaproteobacteria</taxon>
        <taxon>Enterobacterales</taxon>
        <taxon>Enterobacteriaceae</taxon>
        <taxon>Salmonella</taxon>
    </lineage>
</organism>
<gene>
    <name evidence="1" type="primary">cobS</name>
    <name type="ordered locus">SeSA_A2186</name>
</gene>
<feature type="chain" id="PRO_1000189617" description="Adenosylcobinamide-GDP ribazoletransferase">
    <location>
        <begin position="1"/>
        <end position="247"/>
    </location>
</feature>
<feature type="transmembrane region" description="Helical" evidence="1">
    <location>
        <begin position="34"/>
        <end position="54"/>
    </location>
</feature>
<feature type="transmembrane region" description="Helical" evidence="1">
    <location>
        <begin position="59"/>
        <end position="79"/>
    </location>
</feature>
<feature type="transmembrane region" description="Helical" evidence="1">
    <location>
        <begin position="113"/>
        <end position="133"/>
    </location>
</feature>
<feature type="transmembrane region" description="Helical" evidence="1">
    <location>
        <begin position="138"/>
        <end position="158"/>
    </location>
</feature>
<feature type="transmembrane region" description="Helical" evidence="1">
    <location>
        <begin position="171"/>
        <end position="191"/>
    </location>
</feature>
<feature type="transmembrane region" description="Helical" evidence="1">
    <location>
        <begin position="194"/>
        <end position="214"/>
    </location>
</feature>
<sequence length="247" mass="26283">MSKLFWAMLAFISRLPVPSRWSQGLDFEQYSRGIVMFPFIGLILGGVSGLIFILLQSWCGIPLAALFCILALALLTGGFHLDGLADTCDGIFSARRRERMLEIMRDSRLGTHGGLALIFVLLAKILVVSELALRGTPMLAALAAACAAGRGSAVLLMYHHRYARDEGLGNVFIGKVSGRQTCITLGLAVIVATVLLPGMQGLAAMVVTLAAIFILGQLLKRTLGGQTGDTLGAAIELGELIFLLALL</sequence>
<protein>
    <recommendedName>
        <fullName evidence="1">Adenosylcobinamide-GDP ribazoletransferase</fullName>
        <ecNumber evidence="1">2.7.8.26</ecNumber>
    </recommendedName>
    <alternativeName>
        <fullName evidence="1">Cobalamin synthase</fullName>
    </alternativeName>
    <alternativeName>
        <fullName evidence="1">Cobalamin-5'-phosphate synthase</fullName>
    </alternativeName>
</protein>